<dbReference type="EMBL" id="CP001396">
    <property type="protein sequence ID" value="ACR65294.1"/>
    <property type="molecule type" value="Genomic_DNA"/>
</dbReference>
<dbReference type="RefSeq" id="WP_000124700.1">
    <property type="nucleotide sequence ID" value="NC_012759.1"/>
</dbReference>
<dbReference type="SMR" id="C4ZUJ5"/>
<dbReference type="GeneID" id="93778658"/>
<dbReference type="KEGG" id="ebw:BWG_3031"/>
<dbReference type="HOGENOM" id="CLU_002794_4_1_6"/>
<dbReference type="GO" id="GO:0005737">
    <property type="term" value="C:cytoplasm"/>
    <property type="evidence" value="ECO:0007669"/>
    <property type="project" value="UniProtKB-SubCell"/>
</dbReference>
<dbReference type="GO" id="GO:0005525">
    <property type="term" value="F:GTP binding"/>
    <property type="evidence" value="ECO:0007669"/>
    <property type="project" value="UniProtKB-UniRule"/>
</dbReference>
<dbReference type="GO" id="GO:0003924">
    <property type="term" value="F:GTPase activity"/>
    <property type="evidence" value="ECO:0007669"/>
    <property type="project" value="InterPro"/>
</dbReference>
<dbReference type="GO" id="GO:0097216">
    <property type="term" value="F:guanosine tetraphosphate binding"/>
    <property type="evidence" value="ECO:0007669"/>
    <property type="project" value="UniProtKB-ARBA"/>
</dbReference>
<dbReference type="GO" id="GO:0003746">
    <property type="term" value="F:translation elongation factor activity"/>
    <property type="evidence" value="ECO:0007669"/>
    <property type="project" value="UniProtKB-UniRule"/>
</dbReference>
<dbReference type="GO" id="GO:0032790">
    <property type="term" value="P:ribosome disassembly"/>
    <property type="evidence" value="ECO:0007669"/>
    <property type="project" value="TreeGrafter"/>
</dbReference>
<dbReference type="CDD" id="cd01886">
    <property type="entry name" value="EF-G"/>
    <property type="match status" value="1"/>
</dbReference>
<dbReference type="CDD" id="cd16262">
    <property type="entry name" value="EFG_III"/>
    <property type="match status" value="1"/>
</dbReference>
<dbReference type="CDD" id="cd01434">
    <property type="entry name" value="EFG_mtEFG1_IV"/>
    <property type="match status" value="1"/>
</dbReference>
<dbReference type="CDD" id="cd03713">
    <property type="entry name" value="EFG_mtEFG_C"/>
    <property type="match status" value="1"/>
</dbReference>
<dbReference type="CDD" id="cd04088">
    <property type="entry name" value="EFG_mtEFG_II"/>
    <property type="match status" value="1"/>
</dbReference>
<dbReference type="FunFam" id="2.40.30.10:FF:000006">
    <property type="entry name" value="Elongation factor G"/>
    <property type="match status" value="1"/>
</dbReference>
<dbReference type="FunFam" id="3.30.230.10:FF:000003">
    <property type="entry name" value="Elongation factor G"/>
    <property type="match status" value="1"/>
</dbReference>
<dbReference type="FunFam" id="3.30.70.240:FF:000001">
    <property type="entry name" value="Elongation factor G"/>
    <property type="match status" value="1"/>
</dbReference>
<dbReference type="FunFam" id="3.30.70.870:FF:000001">
    <property type="entry name" value="Elongation factor G"/>
    <property type="match status" value="1"/>
</dbReference>
<dbReference type="FunFam" id="3.40.50.300:FF:000029">
    <property type="entry name" value="Elongation factor G"/>
    <property type="match status" value="1"/>
</dbReference>
<dbReference type="Gene3D" id="3.30.230.10">
    <property type="match status" value="1"/>
</dbReference>
<dbReference type="Gene3D" id="3.30.70.240">
    <property type="match status" value="1"/>
</dbReference>
<dbReference type="Gene3D" id="3.30.70.870">
    <property type="entry name" value="Elongation Factor G (Translational Gtpase), domain 3"/>
    <property type="match status" value="1"/>
</dbReference>
<dbReference type="Gene3D" id="3.40.50.300">
    <property type="entry name" value="P-loop containing nucleotide triphosphate hydrolases"/>
    <property type="match status" value="1"/>
</dbReference>
<dbReference type="Gene3D" id="2.40.30.10">
    <property type="entry name" value="Translation factors"/>
    <property type="match status" value="1"/>
</dbReference>
<dbReference type="HAMAP" id="MF_00054_B">
    <property type="entry name" value="EF_G_EF_2_B"/>
    <property type="match status" value="1"/>
</dbReference>
<dbReference type="InterPro" id="IPR041095">
    <property type="entry name" value="EFG_II"/>
</dbReference>
<dbReference type="InterPro" id="IPR009022">
    <property type="entry name" value="EFG_III"/>
</dbReference>
<dbReference type="InterPro" id="IPR035647">
    <property type="entry name" value="EFG_III/V"/>
</dbReference>
<dbReference type="InterPro" id="IPR047872">
    <property type="entry name" value="EFG_IV"/>
</dbReference>
<dbReference type="InterPro" id="IPR035649">
    <property type="entry name" value="EFG_V"/>
</dbReference>
<dbReference type="InterPro" id="IPR000640">
    <property type="entry name" value="EFG_V-like"/>
</dbReference>
<dbReference type="InterPro" id="IPR004161">
    <property type="entry name" value="EFTu-like_2"/>
</dbReference>
<dbReference type="InterPro" id="IPR031157">
    <property type="entry name" value="G_TR_CS"/>
</dbReference>
<dbReference type="InterPro" id="IPR027417">
    <property type="entry name" value="P-loop_NTPase"/>
</dbReference>
<dbReference type="InterPro" id="IPR020568">
    <property type="entry name" value="Ribosomal_Su5_D2-typ_SF"/>
</dbReference>
<dbReference type="InterPro" id="IPR014721">
    <property type="entry name" value="Ribsml_uS5_D2-typ_fold_subgr"/>
</dbReference>
<dbReference type="InterPro" id="IPR005225">
    <property type="entry name" value="Small_GTP-bd"/>
</dbReference>
<dbReference type="InterPro" id="IPR000795">
    <property type="entry name" value="T_Tr_GTP-bd_dom"/>
</dbReference>
<dbReference type="InterPro" id="IPR009000">
    <property type="entry name" value="Transl_B-barrel_sf"/>
</dbReference>
<dbReference type="InterPro" id="IPR004540">
    <property type="entry name" value="Transl_elong_EFG/EF2"/>
</dbReference>
<dbReference type="InterPro" id="IPR005517">
    <property type="entry name" value="Transl_elong_EFG/EF2_IV"/>
</dbReference>
<dbReference type="NCBIfam" id="TIGR00484">
    <property type="entry name" value="EF-G"/>
    <property type="match status" value="1"/>
</dbReference>
<dbReference type="NCBIfam" id="NF009381">
    <property type="entry name" value="PRK12740.1-5"/>
    <property type="match status" value="1"/>
</dbReference>
<dbReference type="NCBIfam" id="TIGR00231">
    <property type="entry name" value="small_GTP"/>
    <property type="match status" value="1"/>
</dbReference>
<dbReference type="PANTHER" id="PTHR43261:SF1">
    <property type="entry name" value="RIBOSOME-RELEASING FACTOR 2, MITOCHONDRIAL"/>
    <property type="match status" value="1"/>
</dbReference>
<dbReference type="PANTHER" id="PTHR43261">
    <property type="entry name" value="TRANSLATION ELONGATION FACTOR G-RELATED"/>
    <property type="match status" value="1"/>
</dbReference>
<dbReference type="Pfam" id="PF00679">
    <property type="entry name" value="EFG_C"/>
    <property type="match status" value="1"/>
</dbReference>
<dbReference type="Pfam" id="PF14492">
    <property type="entry name" value="EFG_III"/>
    <property type="match status" value="1"/>
</dbReference>
<dbReference type="Pfam" id="PF03764">
    <property type="entry name" value="EFG_IV"/>
    <property type="match status" value="1"/>
</dbReference>
<dbReference type="Pfam" id="PF00009">
    <property type="entry name" value="GTP_EFTU"/>
    <property type="match status" value="1"/>
</dbReference>
<dbReference type="Pfam" id="PF03144">
    <property type="entry name" value="GTP_EFTU_D2"/>
    <property type="match status" value="1"/>
</dbReference>
<dbReference type="PRINTS" id="PR00315">
    <property type="entry name" value="ELONGATNFCT"/>
</dbReference>
<dbReference type="SMART" id="SM00838">
    <property type="entry name" value="EFG_C"/>
    <property type="match status" value="1"/>
</dbReference>
<dbReference type="SMART" id="SM00889">
    <property type="entry name" value="EFG_IV"/>
    <property type="match status" value="1"/>
</dbReference>
<dbReference type="SUPFAM" id="SSF54980">
    <property type="entry name" value="EF-G C-terminal domain-like"/>
    <property type="match status" value="2"/>
</dbReference>
<dbReference type="SUPFAM" id="SSF52540">
    <property type="entry name" value="P-loop containing nucleoside triphosphate hydrolases"/>
    <property type="match status" value="1"/>
</dbReference>
<dbReference type="SUPFAM" id="SSF54211">
    <property type="entry name" value="Ribosomal protein S5 domain 2-like"/>
    <property type="match status" value="1"/>
</dbReference>
<dbReference type="SUPFAM" id="SSF50447">
    <property type="entry name" value="Translation proteins"/>
    <property type="match status" value="1"/>
</dbReference>
<dbReference type="PROSITE" id="PS00301">
    <property type="entry name" value="G_TR_1"/>
    <property type="match status" value="1"/>
</dbReference>
<dbReference type="PROSITE" id="PS51722">
    <property type="entry name" value="G_TR_2"/>
    <property type="match status" value="1"/>
</dbReference>
<proteinExistence type="inferred from homology"/>
<comment type="function">
    <text evidence="2">Catalyzes the GTP-dependent ribosomal translocation step during translation elongation. During this step, the ribosome changes from the pre-translocational (PRE) to the post-translocational (POST) state as the newly formed A-site-bound peptidyl-tRNA and P-site-bound deacylated tRNA move to the P and E sites, respectively. Catalyzes the coordinated movement of the two tRNA molecules, the mRNA and conformational changes in the ribosome.</text>
</comment>
<comment type="subcellular location">
    <subcellularLocation>
        <location evidence="2">Cytoplasm</location>
    </subcellularLocation>
</comment>
<comment type="similarity">
    <text evidence="2">Belongs to the TRAFAC class translation factor GTPase superfamily. Classic translation factor GTPase family. EF-G/EF-2 subfamily.</text>
</comment>
<name>EFG_ECOBW</name>
<keyword id="KW-0007">Acetylation</keyword>
<keyword id="KW-0963">Cytoplasm</keyword>
<keyword id="KW-0251">Elongation factor</keyword>
<keyword id="KW-0342">GTP-binding</keyword>
<keyword id="KW-0547">Nucleotide-binding</keyword>
<keyword id="KW-0648">Protein biosynthesis</keyword>
<accession>C4ZUJ5</accession>
<sequence>MARTTPIARYRNIGISAHIDAGKTTTTERILFYTGVNHKIGEVHDGAATMDWMEQEQERGITITSAATTAFWSGMAKQYEPHRINIIDTPGHVDFTIEVERSMRVLDGAVMVYCAVGGVQPQSETVWRQANKYKVPRIAFVNKMDRMGANFLKVVNQIKTRLGANPVPLQLAIGAEEHFTGVVDLVKMKAINWNDADQGVTFEYEDIPADMVELANEWHQNLIESAAEASEELMEKYLGGEELTEAEIKGALRQRVLNNEIILVTCGSAFKNKGVQAMLDAVIDYLPSPVDVPAINGILDDGKDTPAERHASDDEPFSALAFKIATDPFVGNLTFFRVYSGVVNSGDTVLNSVKAARERFGRIVQMHANKREEIKEVRAGDIAAAIGLKDVTTGDTLCDPDAPIILERMEFPEPVISIAVEPKTKADQEKMGLALGRLAKEDPSFRVWTDEESNQTIIAGMGELHLDIIVDRMKREFNVEANVGKPQVAYRETIRQKVTDVEGKHAKQSGGRGQYGHVVIDMYPLEPGSNPKGYEFINDIKGGVIPGEYIPAVDKGIQEQLKAGPLAGYPVVDMGIRLHFGSYHDVDSSELAFKLAASIAFKEGFKKAKPVLLEPIMKVEVETPEENTGDVIGDLSRRRGMLKGQESEVTGVKIHAEVPLSEMFGYATQLRSLTKGRASYTMEFLKYDEAPSNVAQAVIEARGK</sequence>
<protein>
    <recommendedName>
        <fullName evidence="2">Elongation factor G</fullName>
        <shortName evidence="2">EF-G</shortName>
    </recommendedName>
</protein>
<reference key="1">
    <citation type="journal article" date="2009" name="J. Bacteriol.">
        <title>Genomic sequencing reveals regulatory mutations and recombinational events in the widely used MC4100 lineage of Escherichia coli K-12.</title>
        <authorList>
            <person name="Ferenci T."/>
            <person name="Zhou Z."/>
            <person name="Betteridge T."/>
            <person name="Ren Y."/>
            <person name="Liu Y."/>
            <person name="Feng L."/>
            <person name="Reeves P.R."/>
            <person name="Wang L."/>
        </authorList>
    </citation>
    <scope>NUCLEOTIDE SEQUENCE [LARGE SCALE GENOMIC DNA]</scope>
    <source>
        <strain>K12 / MC4100 / BW2952</strain>
    </source>
</reference>
<feature type="chain" id="PRO_1000202299" description="Elongation factor G">
    <location>
        <begin position="1"/>
        <end position="704"/>
    </location>
</feature>
<feature type="domain" description="tr-type G">
    <location>
        <begin position="8"/>
        <end position="290"/>
    </location>
</feature>
<feature type="binding site" evidence="2">
    <location>
        <begin position="17"/>
        <end position="24"/>
    </location>
    <ligand>
        <name>GTP</name>
        <dbReference type="ChEBI" id="CHEBI:37565"/>
    </ligand>
</feature>
<feature type="binding site" evidence="2">
    <location>
        <begin position="88"/>
        <end position="92"/>
    </location>
    <ligand>
        <name>GTP</name>
        <dbReference type="ChEBI" id="CHEBI:37565"/>
    </ligand>
</feature>
<feature type="binding site" evidence="2">
    <location>
        <begin position="142"/>
        <end position="145"/>
    </location>
    <ligand>
        <name>GTP</name>
        <dbReference type="ChEBI" id="CHEBI:37565"/>
    </ligand>
</feature>
<feature type="modified residue" description="N6-acetyllysine" evidence="1">
    <location>
        <position position="504"/>
    </location>
</feature>
<feature type="modified residue" description="N6-acetyllysine" evidence="1">
    <location>
        <position position="643"/>
    </location>
</feature>
<gene>
    <name evidence="2" type="primary">fusA</name>
    <name type="ordered locus">BWG_3031</name>
</gene>
<organism>
    <name type="scientific">Escherichia coli (strain K12 / MC4100 / BW2952)</name>
    <dbReference type="NCBI Taxonomy" id="595496"/>
    <lineage>
        <taxon>Bacteria</taxon>
        <taxon>Pseudomonadati</taxon>
        <taxon>Pseudomonadota</taxon>
        <taxon>Gammaproteobacteria</taxon>
        <taxon>Enterobacterales</taxon>
        <taxon>Enterobacteriaceae</taxon>
        <taxon>Escherichia</taxon>
    </lineage>
</organism>
<evidence type="ECO:0000250" key="1"/>
<evidence type="ECO:0000255" key="2">
    <source>
        <dbReference type="HAMAP-Rule" id="MF_00054"/>
    </source>
</evidence>